<organism>
    <name type="scientific">Pongo abelii</name>
    <name type="common">Sumatran orangutan</name>
    <name type="synonym">Pongo pygmaeus abelii</name>
    <dbReference type="NCBI Taxonomy" id="9601"/>
    <lineage>
        <taxon>Eukaryota</taxon>
        <taxon>Metazoa</taxon>
        <taxon>Chordata</taxon>
        <taxon>Craniata</taxon>
        <taxon>Vertebrata</taxon>
        <taxon>Euteleostomi</taxon>
        <taxon>Mammalia</taxon>
        <taxon>Eutheria</taxon>
        <taxon>Euarchontoglires</taxon>
        <taxon>Primates</taxon>
        <taxon>Haplorrhini</taxon>
        <taxon>Catarrhini</taxon>
        <taxon>Hominidae</taxon>
        <taxon>Pongo</taxon>
    </lineage>
</organism>
<comment type="function">
    <text evidence="2">Activates the JUN N-terminal pathway through activation of the MAP kinase kinase MAP2K7. Acts synergistically with PRDX3 to regulate the activation of NF-kappa-B in the cytosol. This activation is kinase-dependent and involves activating the IKK complex, the IKBKB-containing complex that phosphorylates inhibitors of NF-kappa-B (By similarity).</text>
</comment>
<comment type="catalytic activity">
    <reaction evidence="8">
        <text>L-seryl-[protein] + ATP = O-phospho-L-seryl-[protein] + ADP + H(+)</text>
        <dbReference type="Rhea" id="RHEA:17989"/>
        <dbReference type="Rhea" id="RHEA-COMP:9863"/>
        <dbReference type="Rhea" id="RHEA-COMP:11604"/>
        <dbReference type="ChEBI" id="CHEBI:15378"/>
        <dbReference type="ChEBI" id="CHEBI:29999"/>
        <dbReference type="ChEBI" id="CHEBI:30616"/>
        <dbReference type="ChEBI" id="CHEBI:83421"/>
        <dbReference type="ChEBI" id="CHEBI:456216"/>
        <dbReference type="EC" id="2.7.11.25"/>
    </reaction>
</comment>
<comment type="catalytic activity">
    <reaction evidence="8">
        <text>L-threonyl-[protein] + ATP = O-phospho-L-threonyl-[protein] + ADP + H(+)</text>
        <dbReference type="Rhea" id="RHEA:46608"/>
        <dbReference type="Rhea" id="RHEA-COMP:11060"/>
        <dbReference type="Rhea" id="RHEA-COMP:11605"/>
        <dbReference type="ChEBI" id="CHEBI:15378"/>
        <dbReference type="ChEBI" id="CHEBI:30013"/>
        <dbReference type="ChEBI" id="CHEBI:30616"/>
        <dbReference type="ChEBI" id="CHEBI:61977"/>
        <dbReference type="ChEBI" id="CHEBI:456216"/>
        <dbReference type="EC" id="2.7.11.25"/>
    </reaction>
</comment>
<comment type="cofactor">
    <cofactor evidence="4">
        <name>Mg(2+)</name>
        <dbReference type="ChEBI" id="CHEBI:18420"/>
    </cofactor>
</comment>
<comment type="activity regulation">
    <text evidence="2">Activated by autophosphorylation and homodimerization.</text>
</comment>
<comment type="subunit">
    <text evidence="2">Homodimer; forms dimers through the leucine-zipper motif. Interacts with the C-terminus of MAPK8IP1 through the kinase catalytic domain. Binds PRDX3. Associates with the IKK complex through the kinase domain (By similarity).</text>
</comment>
<comment type="subcellular location">
    <subcellularLocation>
        <location evidence="1">Cytoplasm</location>
    </subcellularLocation>
    <subcellularLocation>
        <location evidence="1">Membrane</location>
        <topology evidence="1">Peripheral membrane protein</topology>
    </subcellularLocation>
</comment>
<comment type="PTM">
    <text evidence="2">Autophosphorylated on serine and threonine residues.</text>
</comment>
<comment type="similarity">
    <text evidence="8">Belongs to the protein kinase superfamily. STE Ser/Thr protein kinase family. MAP kinase kinase kinase subfamily.</text>
</comment>
<proteinExistence type="evidence at transcript level"/>
<gene>
    <name evidence="2" type="primary">MAP3K13</name>
</gene>
<reference evidence="9" key="1">
    <citation type="submission" date="2004-11" db="EMBL/GenBank/DDBJ databases">
        <authorList>
            <consortium name="The German cDNA consortium"/>
        </authorList>
    </citation>
    <scope>NUCLEOTIDE SEQUENCE [LARGE SCALE MRNA]</scope>
    <source>
        <tissue evidence="9">Brain cortex</tissue>
    </source>
</reference>
<evidence type="ECO:0000250" key="1"/>
<evidence type="ECO:0000250" key="2">
    <source>
        <dbReference type="UniProtKB" id="O43283"/>
    </source>
</evidence>
<evidence type="ECO:0000250" key="3">
    <source>
        <dbReference type="UniProtKB" id="Q12852"/>
    </source>
</evidence>
<evidence type="ECO:0000250" key="4">
    <source>
        <dbReference type="UniProtKB" id="Q60700"/>
    </source>
</evidence>
<evidence type="ECO:0000255" key="5">
    <source>
        <dbReference type="PROSITE-ProRule" id="PRU00159"/>
    </source>
</evidence>
<evidence type="ECO:0000255" key="6">
    <source>
        <dbReference type="PROSITE-ProRule" id="PRU10027"/>
    </source>
</evidence>
<evidence type="ECO:0000256" key="7">
    <source>
        <dbReference type="SAM" id="MobiDB-lite"/>
    </source>
</evidence>
<evidence type="ECO:0000305" key="8"/>
<evidence type="ECO:0000312" key="9">
    <source>
        <dbReference type="EMBL" id="CAH91783.1"/>
    </source>
</evidence>
<keyword id="KW-0067">ATP-binding</keyword>
<keyword id="KW-0963">Cytoplasm</keyword>
<keyword id="KW-0418">Kinase</keyword>
<keyword id="KW-0460">Magnesium</keyword>
<keyword id="KW-0472">Membrane</keyword>
<keyword id="KW-0479">Metal-binding</keyword>
<keyword id="KW-0547">Nucleotide-binding</keyword>
<keyword id="KW-0597">Phosphoprotein</keyword>
<keyword id="KW-1185">Reference proteome</keyword>
<keyword id="KW-0677">Repeat</keyword>
<keyword id="KW-0723">Serine/threonine-protein kinase</keyword>
<keyword id="KW-0808">Transferase</keyword>
<sequence length="966" mass="108442">MANFQEHLSCSSSPHLPFSESKTFNGLQDELTAMGNHPSPKLLEDQQEKGMVRAELIESVHSPVTTTVLTSVSEDSRDQFENSVLQLREHDESEMAVSQGNSNTVDAESTSGTEDIKIQFSRSGSGSGGFLEGLFGCLRPVWNIIGKAYATDYKLQQQDTWEVPFEEISELQWLGSGAQGAVFLGKFRAEEVAIKKVREQNETDIKHLRKLKHPNIIAFKGVCTQAPCYCIIMEYCAHGQLYEVLRAGRKITPRLLVDWSTGIASGMNYLHLHKIIHRDLKSPNVLVTHTDAVKISDFGTSKELSDKSTKMSFAGTVAWLAPEVIRNEPVSEKVDIWSFGVVLWELLTGEIPYKDVDSSAIIWGVGSNSLHLPVPSTCPDGFKILMKQTWQSKPRNRPSFRQTLMHLDIASADVLATPQETYFKSQAEWREEVKKHFEKIKSEGTCIHRLDEELIRRRREELRHALDIREHYERKLERANNLYMELSAIMLQLEMREKELVKREQAVEKKYPGTYKRHPVRPIIHPNAMEKLMKRKGVPHKSGMQTKRPDLLRSEGIPTTEVAPTASPLSGSPKMSTSSSKSRYRSKPRHRRGNSRGSHSDFVAILKNQPAQENSPNPTYLHQAQSQYPSLHHRNSLQQQYQQPPPAMSQSHHPRLNMHGQDIATCANNLRYFGPAAALRSPLSNHAQRQLPGSSPDLISTAMAADCWRGSEPDKDQAGPWGCCQADPYDPCLQCRPEQYGSLDIPSAEPVGRSPDLSKSPAHNPLLENAQSSEKMEENEFSSCRSESSLGTSHLVTPPALPRKTRPLQKSGDDSSEEEEGEVDSEVEFPRRQRPHRCISSCQSYSTFSSENFSVSDGEEGNTSDHSNSPDELADKLEDRLAEKLDDLLSQTPEIPIDISSHSDGLSDKECAVRRVKTQMSLGKLCVEERGYENPMQFEESDCDSSDGECSDATVRTNKHYSSATW</sequence>
<accession>Q5R8X7</accession>
<name>M3K13_PONAB</name>
<feature type="chain" id="PRO_0000086265" description="Mitogen-activated protein kinase kinase kinase 13">
    <location>
        <begin position="1"/>
        <end position="966"/>
    </location>
</feature>
<feature type="domain" description="Protein kinase" evidence="5">
    <location>
        <begin position="168"/>
        <end position="409"/>
    </location>
</feature>
<feature type="region of interest" description="Disordered" evidence="7">
    <location>
        <begin position="1"/>
        <end position="22"/>
    </location>
</feature>
<feature type="region of interest" description="Disordered" evidence="7">
    <location>
        <begin position="93"/>
        <end position="112"/>
    </location>
</feature>
<feature type="region of interest" description="Leucine-zipper 1">
    <location>
        <begin position="433"/>
        <end position="454"/>
    </location>
</feature>
<feature type="region of interest" description="Leucine-zipper 2">
    <location>
        <begin position="486"/>
        <end position="507"/>
    </location>
</feature>
<feature type="region of interest" description="Disordered" evidence="7">
    <location>
        <begin position="534"/>
        <end position="652"/>
    </location>
</feature>
<feature type="region of interest" description="Disordered" evidence="7">
    <location>
        <begin position="744"/>
        <end position="834"/>
    </location>
</feature>
<feature type="region of interest" description="Acidic" evidence="8">
    <location>
        <begin position="815"/>
        <end position="828"/>
    </location>
</feature>
<feature type="region of interest" description="Disordered" evidence="7">
    <location>
        <begin position="846"/>
        <end position="873"/>
    </location>
</feature>
<feature type="region of interest" description="Disordered" evidence="7">
    <location>
        <begin position="887"/>
        <end position="906"/>
    </location>
</feature>
<feature type="compositionally biased region" description="Polar residues" evidence="7">
    <location>
        <begin position="96"/>
        <end position="112"/>
    </location>
</feature>
<feature type="compositionally biased region" description="Low complexity" evidence="7">
    <location>
        <begin position="567"/>
        <end position="581"/>
    </location>
</feature>
<feature type="compositionally biased region" description="Basic residues" evidence="7">
    <location>
        <begin position="582"/>
        <end position="594"/>
    </location>
</feature>
<feature type="compositionally biased region" description="Polar residues" evidence="7">
    <location>
        <begin position="609"/>
        <end position="629"/>
    </location>
</feature>
<feature type="compositionally biased region" description="Polar residues" evidence="7">
    <location>
        <begin position="781"/>
        <end position="795"/>
    </location>
</feature>
<feature type="compositionally biased region" description="Acidic residues" evidence="7">
    <location>
        <begin position="814"/>
        <end position="827"/>
    </location>
</feature>
<feature type="compositionally biased region" description="Polar residues" evidence="7">
    <location>
        <begin position="846"/>
        <end position="855"/>
    </location>
</feature>
<feature type="active site" description="Proton acceptor" evidence="3 5 6">
    <location>
        <position position="279"/>
    </location>
</feature>
<feature type="binding site" evidence="3 5">
    <location>
        <begin position="174"/>
        <end position="182"/>
    </location>
    <ligand>
        <name>ATP</name>
        <dbReference type="ChEBI" id="CHEBI:30616"/>
    </ligand>
</feature>
<feature type="binding site" evidence="4 5">
    <location>
        <position position="195"/>
    </location>
    <ligand>
        <name>ATP</name>
        <dbReference type="ChEBI" id="CHEBI:30616"/>
    </ligand>
</feature>
<dbReference type="EC" id="2.7.11.25"/>
<dbReference type="EMBL" id="CR859621">
    <property type="protein sequence ID" value="CAH91783.1"/>
    <property type="molecule type" value="mRNA"/>
</dbReference>
<dbReference type="RefSeq" id="NP_001126034.1">
    <property type="nucleotide sequence ID" value="NM_001132562.1"/>
</dbReference>
<dbReference type="SMR" id="Q5R8X7"/>
<dbReference type="FunCoup" id="Q5R8X7">
    <property type="interactions" value="633"/>
</dbReference>
<dbReference type="STRING" id="9601.ENSPPYP00000016066"/>
<dbReference type="GeneID" id="100172983"/>
<dbReference type="KEGG" id="pon:100172983"/>
<dbReference type="CTD" id="9175"/>
<dbReference type="eggNOG" id="KOG4721">
    <property type="taxonomic scope" value="Eukaryota"/>
</dbReference>
<dbReference type="InParanoid" id="Q5R8X7"/>
<dbReference type="OrthoDB" id="339325at2759"/>
<dbReference type="Proteomes" id="UP000001595">
    <property type="component" value="Unplaced"/>
</dbReference>
<dbReference type="GO" id="GO:0005737">
    <property type="term" value="C:cytoplasm"/>
    <property type="evidence" value="ECO:0007669"/>
    <property type="project" value="UniProtKB-SubCell"/>
</dbReference>
<dbReference type="GO" id="GO:0016020">
    <property type="term" value="C:membrane"/>
    <property type="evidence" value="ECO:0000250"/>
    <property type="project" value="UniProtKB"/>
</dbReference>
<dbReference type="GO" id="GO:0005524">
    <property type="term" value="F:ATP binding"/>
    <property type="evidence" value="ECO:0007669"/>
    <property type="project" value="UniProtKB-KW"/>
</dbReference>
<dbReference type="GO" id="GO:0106137">
    <property type="term" value="F:IkappaB kinase complex binding"/>
    <property type="evidence" value="ECO:0000250"/>
    <property type="project" value="UniProtKB"/>
</dbReference>
<dbReference type="GO" id="GO:0004709">
    <property type="term" value="F:MAP kinase kinase kinase activity"/>
    <property type="evidence" value="ECO:0000250"/>
    <property type="project" value="UniProtKB"/>
</dbReference>
<dbReference type="GO" id="GO:0046872">
    <property type="term" value="F:metal ion binding"/>
    <property type="evidence" value="ECO:0007669"/>
    <property type="project" value="UniProtKB-KW"/>
</dbReference>
<dbReference type="GO" id="GO:0042803">
    <property type="term" value="F:protein homodimerization activity"/>
    <property type="evidence" value="ECO:0000250"/>
    <property type="project" value="UniProtKB"/>
</dbReference>
<dbReference type="GO" id="GO:0106310">
    <property type="term" value="F:protein serine kinase activity"/>
    <property type="evidence" value="ECO:0007669"/>
    <property type="project" value="RHEA"/>
</dbReference>
<dbReference type="GO" id="GO:0004674">
    <property type="term" value="F:protein serine/threonine kinase activity"/>
    <property type="evidence" value="ECO:0000250"/>
    <property type="project" value="UniProtKB"/>
</dbReference>
<dbReference type="GO" id="GO:0007254">
    <property type="term" value="P:JNK cascade"/>
    <property type="evidence" value="ECO:0000250"/>
    <property type="project" value="UniProtKB"/>
</dbReference>
<dbReference type="GO" id="GO:0051092">
    <property type="term" value="P:positive regulation of NF-kappaB transcription factor activity"/>
    <property type="evidence" value="ECO:0000250"/>
    <property type="project" value="UniProtKB"/>
</dbReference>
<dbReference type="GO" id="GO:0046777">
    <property type="term" value="P:protein autophosphorylation"/>
    <property type="evidence" value="ECO:0000250"/>
    <property type="project" value="UniProtKB"/>
</dbReference>
<dbReference type="GO" id="GO:0006468">
    <property type="term" value="P:protein phosphorylation"/>
    <property type="evidence" value="ECO:0000250"/>
    <property type="project" value="UniProtKB"/>
</dbReference>
<dbReference type="GO" id="GO:0051403">
    <property type="term" value="P:stress-activated MAPK cascade"/>
    <property type="evidence" value="ECO:0000250"/>
    <property type="project" value="UniProtKB"/>
</dbReference>
<dbReference type="CDD" id="cd14059">
    <property type="entry name" value="STKc_MAP3K12_13"/>
    <property type="match status" value="1"/>
</dbReference>
<dbReference type="FunFam" id="1.10.510.10:FF:000087">
    <property type="entry name" value="Mitogen-activated protein kinase kinase kinase 12"/>
    <property type="match status" value="1"/>
</dbReference>
<dbReference type="FunFam" id="3.30.200.20:FF:000095">
    <property type="entry name" value="Mitogen-activated protein kinase kinase kinase 12"/>
    <property type="match status" value="1"/>
</dbReference>
<dbReference type="Gene3D" id="3.30.200.20">
    <property type="entry name" value="Phosphorylase Kinase, domain 1"/>
    <property type="match status" value="1"/>
</dbReference>
<dbReference type="Gene3D" id="1.10.510.10">
    <property type="entry name" value="Transferase(Phosphotransferase) domain 1"/>
    <property type="match status" value="1"/>
</dbReference>
<dbReference type="InterPro" id="IPR011009">
    <property type="entry name" value="Kinase-like_dom_sf"/>
</dbReference>
<dbReference type="InterPro" id="IPR017419">
    <property type="entry name" value="MAP3K12_MAP3K13"/>
</dbReference>
<dbReference type="InterPro" id="IPR027258">
    <property type="entry name" value="MAPKKK13"/>
</dbReference>
<dbReference type="InterPro" id="IPR000719">
    <property type="entry name" value="Prot_kinase_dom"/>
</dbReference>
<dbReference type="InterPro" id="IPR001245">
    <property type="entry name" value="Ser-Thr/Tyr_kinase_cat_dom"/>
</dbReference>
<dbReference type="InterPro" id="IPR008271">
    <property type="entry name" value="Ser/Thr_kinase_AS"/>
</dbReference>
<dbReference type="InterPro" id="IPR051681">
    <property type="entry name" value="Ser/Thr_Kinases-Pseudokinases"/>
</dbReference>
<dbReference type="PANTHER" id="PTHR44329:SF14">
    <property type="entry name" value="MITOGEN-ACTIVATED PROTEIN KINASE KINASE KINASE 13"/>
    <property type="match status" value="1"/>
</dbReference>
<dbReference type="PANTHER" id="PTHR44329">
    <property type="entry name" value="SERINE/THREONINE-PROTEIN KINASE TNNI3K-RELATED"/>
    <property type="match status" value="1"/>
</dbReference>
<dbReference type="Pfam" id="PF07714">
    <property type="entry name" value="PK_Tyr_Ser-Thr"/>
    <property type="match status" value="1"/>
</dbReference>
<dbReference type="PIRSF" id="PIRSF038165">
    <property type="entry name" value="MAPKKK12_MAPKKK13"/>
    <property type="match status" value="1"/>
</dbReference>
<dbReference type="PIRSF" id="PIRSF500742">
    <property type="entry name" value="MAPKKK13"/>
    <property type="match status" value="1"/>
</dbReference>
<dbReference type="PRINTS" id="PR00109">
    <property type="entry name" value="TYRKINASE"/>
</dbReference>
<dbReference type="SMART" id="SM00220">
    <property type="entry name" value="S_TKc"/>
    <property type="match status" value="1"/>
</dbReference>
<dbReference type="SUPFAM" id="SSF56112">
    <property type="entry name" value="Protein kinase-like (PK-like)"/>
    <property type="match status" value="1"/>
</dbReference>
<dbReference type="PROSITE" id="PS50011">
    <property type="entry name" value="PROTEIN_KINASE_DOM"/>
    <property type="match status" value="1"/>
</dbReference>
<dbReference type="PROSITE" id="PS00108">
    <property type="entry name" value="PROTEIN_KINASE_ST"/>
    <property type="match status" value="1"/>
</dbReference>
<protein>
    <recommendedName>
        <fullName>Mitogen-activated protein kinase kinase kinase 13</fullName>
        <ecNumber>2.7.11.25</ecNumber>
    </recommendedName>
</protein>